<organism>
    <name type="scientific">Zea mays</name>
    <name type="common">Maize</name>
    <dbReference type="NCBI Taxonomy" id="4577"/>
    <lineage>
        <taxon>Eukaryota</taxon>
        <taxon>Viridiplantae</taxon>
        <taxon>Streptophyta</taxon>
        <taxon>Embryophyta</taxon>
        <taxon>Tracheophyta</taxon>
        <taxon>Spermatophyta</taxon>
        <taxon>Magnoliopsida</taxon>
        <taxon>Liliopsida</taxon>
        <taxon>Poales</taxon>
        <taxon>Poaceae</taxon>
        <taxon>PACMAD clade</taxon>
        <taxon>Panicoideae</taxon>
        <taxon>Andropogonodae</taxon>
        <taxon>Andropogoneae</taxon>
        <taxon>Tripsacinae</taxon>
        <taxon>Zea</taxon>
    </lineage>
</organism>
<accession>O24575</accession>
<name>DCAM_MAIZE</name>
<feature type="chain" id="PRO_0000030013" description="S-adenosylmethionine decarboxylase beta chain" evidence="1">
    <location>
        <begin position="1"/>
        <end position="77"/>
    </location>
</feature>
<feature type="chain" id="PRO_0000030014" description="S-adenosylmethionine decarboxylase alpha chain" evidence="1">
    <location>
        <begin position="78"/>
        <end position="400"/>
    </location>
</feature>
<feature type="active site" evidence="1">
    <location>
        <position position="18"/>
    </location>
</feature>
<feature type="active site" evidence="1">
    <location>
        <position position="21"/>
    </location>
</feature>
<feature type="active site" description="Schiff-base intermediate with substrate; via pyruvic acid" evidence="1">
    <location>
        <position position="78"/>
    </location>
</feature>
<feature type="active site" description="Proton donor; for catalytic activity" evidence="1">
    <location>
        <position position="92"/>
    </location>
</feature>
<feature type="active site" description="Proton acceptor; for processing activity" evidence="1">
    <location>
        <position position="243"/>
    </location>
</feature>
<feature type="active site" description="Proton acceptor; for processing activity" evidence="1">
    <location>
        <position position="256"/>
    </location>
</feature>
<feature type="site" description="Cleavage (non-hydrolytic); by autolysis" evidence="1">
    <location>
        <begin position="77"/>
        <end position="78"/>
    </location>
</feature>
<feature type="modified residue" description="Pyruvic acid (Ser); by autocatalysis" evidence="1">
    <location>
        <position position="78"/>
    </location>
</feature>
<proteinExistence type="evidence at transcript level"/>
<protein>
    <recommendedName>
        <fullName>S-adenosylmethionine decarboxylase proenzyme</fullName>
        <shortName>AdoMetDC</shortName>
        <shortName>SAMDC</shortName>
        <ecNumber>4.1.1.50</ecNumber>
    </recommendedName>
    <component>
        <recommendedName>
            <fullName>S-adenosylmethionine decarboxylase alpha chain</fullName>
        </recommendedName>
    </component>
    <component>
        <recommendedName>
            <fullName>S-adenosylmethionine decarboxylase beta chain</fullName>
        </recommendedName>
    </component>
</protein>
<comment type="catalytic activity">
    <reaction>
        <text>S-adenosyl-L-methionine + H(+) = S-adenosyl 3-(methylsulfanyl)propylamine + CO2</text>
        <dbReference type="Rhea" id="RHEA:15981"/>
        <dbReference type="ChEBI" id="CHEBI:15378"/>
        <dbReference type="ChEBI" id="CHEBI:16526"/>
        <dbReference type="ChEBI" id="CHEBI:57443"/>
        <dbReference type="ChEBI" id="CHEBI:59789"/>
        <dbReference type="EC" id="4.1.1.50"/>
    </reaction>
</comment>
<comment type="cofactor">
    <cofactor evidence="1">
        <name>pyruvate</name>
        <dbReference type="ChEBI" id="CHEBI:15361"/>
    </cofactor>
    <text evidence="1">Binds 1 pyruvoyl group covalently per subunit.</text>
</comment>
<comment type="pathway">
    <text>Amine and polyamine biosynthesis; S-adenosylmethioninamine biosynthesis; S-adenosylmethioninamine from S-adenosyl-L-methionine: step 1/1.</text>
</comment>
<comment type="PTM">
    <text evidence="1">Is synthesized initially as an inactive proenzyme. Formation of the active enzyme involves a self-maturation process in which the active site pyruvoyl group is generated from an internal serine residue via an autocatalytic post-translational modification. Two non-identical subunits are generated from the proenzyme in this reaction, and the pyruvate is formed at the N-terminus of the alpha chain, which is derived from the carboxyl end of the proenzyme. The post-translation cleavage follows an unusual pathway, termed non-hydrolytic serinolysis, in which the side chain hydroxyl group of the serine supplies its oxygen atom to form the C-terminus of the beta chain, while the remainder of the serine residue undergoes an oxidative deamination to produce ammonia and the pyruvoyl group blocking the N-terminus of the alpha chain (By similarity).</text>
</comment>
<comment type="similarity">
    <text evidence="2">Belongs to the eukaryotic AdoMetDC family.</text>
</comment>
<keyword id="KW-0068">Autocatalytic cleavage</keyword>
<keyword id="KW-0210">Decarboxylase</keyword>
<keyword id="KW-0456">Lyase</keyword>
<keyword id="KW-0620">Polyamine biosynthesis</keyword>
<keyword id="KW-0670">Pyruvate</keyword>
<keyword id="KW-1185">Reference proteome</keyword>
<keyword id="KW-0949">S-adenosyl-L-methionine</keyword>
<keyword id="KW-0704">Schiff base</keyword>
<keyword id="KW-0745">Spermidine biosynthesis</keyword>
<keyword id="KW-0865">Zymogen</keyword>
<dbReference type="EC" id="4.1.1.50"/>
<dbReference type="EMBL" id="Y07767">
    <property type="protein sequence ID" value="CAA69075.1"/>
    <property type="molecule type" value="mRNA"/>
</dbReference>
<dbReference type="PIR" id="T03947">
    <property type="entry name" value="T03947"/>
</dbReference>
<dbReference type="SMR" id="O24575"/>
<dbReference type="FunCoup" id="O24575">
    <property type="interactions" value="2671"/>
</dbReference>
<dbReference type="STRING" id="4577.O24575"/>
<dbReference type="PaxDb" id="4577-GRMZM2G154397_P01"/>
<dbReference type="EnsemblPlants" id="Zm00001eb078440_T001">
    <property type="protein sequence ID" value="Zm00001eb078440_P001"/>
    <property type="gene ID" value="Zm00001eb078440"/>
</dbReference>
<dbReference type="EnsemblPlants" id="Zm00001eb078440_T002">
    <property type="protein sequence ID" value="Zm00001eb078440_P002"/>
    <property type="gene ID" value="Zm00001eb078440"/>
</dbReference>
<dbReference type="Gramene" id="Zm00001eb078440_T001">
    <property type="protein sequence ID" value="Zm00001eb078440_P001"/>
    <property type="gene ID" value="Zm00001eb078440"/>
</dbReference>
<dbReference type="Gramene" id="Zm00001eb078440_T002">
    <property type="protein sequence ID" value="Zm00001eb078440_P002"/>
    <property type="gene ID" value="Zm00001eb078440"/>
</dbReference>
<dbReference type="KEGG" id="zma:542733"/>
<dbReference type="eggNOG" id="KOG0788">
    <property type="taxonomic scope" value="Eukaryota"/>
</dbReference>
<dbReference type="HOGENOM" id="CLU_023050_2_0_1"/>
<dbReference type="InParanoid" id="O24575"/>
<dbReference type="OMA" id="AITCHGG"/>
<dbReference type="OrthoDB" id="1068353at2759"/>
<dbReference type="UniPathway" id="UPA00331">
    <property type="reaction ID" value="UER00451"/>
</dbReference>
<dbReference type="Proteomes" id="UP000007305">
    <property type="component" value="Chromosome 2"/>
</dbReference>
<dbReference type="ExpressionAtlas" id="O24575">
    <property type="expression patterns" value="baseline and differential"/>
</dbReference>
<dbReference type="GO" id="GO:0005829">
    <property type="term" value="C:cytosol"/>
    <property type="evidence" value="ECO:0000318"/>
    <property type="project" value="GO_Central"/>
</dbReference>
<dbReference type="GO" id="GO:0004014">
    <property type="term" value="F:adenosylmethionine decarboxylase activity"/>
    <property type="evidence" value="ECO:0000318"/>
    <property type="project" value="GO_Central"/>
</dbReference>
<dbReference type="GO" id="GO:0008295">
    <property type="term" value="P:spermidine biosynthetic process"/>
    <property type="evidence" value="ECO:0000318"/>
    <property type="project" value="GO_Central"/>
</dbReference>
<dbReference type="GO" id="GO:0006597">
    <property type="term" value="P:spermine biosynthetic process"/>
    <property type="evidence" value="ECO:0000318"/>
    <property type="project" value="GO_Central"/>
</dbReference>
<dbReference type="FunFam" id="3.30.360.50:FF:000001">
    <property type="entry name" value="S-adenosylmethionine decarboxylase proenzyme"/>
    <property type="match status" value="1"/>
</dbReference>
<dbReference type="FunFam" id="3.60.90.10:FF:000002">
    <property type="entry name" value="S-adenosylmethionine decarboxylase proenzyme"/>
    <property type="match status" value="1"/>
</dbReference>
<dbReference type="Gene3D" id="3.30.360.50">
    <property type="entry name" value="S-adenosylmethionine decarboxylase"/>
    <property type="match status" value="1"/>
</dbReference>
<dbReference type="Gene3D" id="3.60.90.10">
    <property type="entry name" value="S-adenosylmethionine decarboxylase"/>
    <property type="match status" value="1"/>
</dbReference>
<dbReference type="InterPro" id="IPR048283">
    <property type="entry name" value="AdoMetDC-like"/>
</dbReference>
<dbReference type="InterPro" id="IPR001985">
    <property type="entry name" value="S-AdoMet_decarboxylase_euk"/>
</dbReference>
<dbReference type="InterPro" id="IPR016067">
    <property type="entry name" value="S-AdoMet_deCO2ase_core"/>
</dbReference>
<dbReference type="InterPro" id="IPR018166">
    <property type="entry name" value="S-AdoMet_deCO2ase_CS"/>
</dbReference>
<dbReference type="NCBIfam" id="TIGR00535">
    <property type="entry name" value="SAM_DCase"/>
    <property type="match status" value="1"/>
</dbReference>
<dbReference type="PANTHER" id="PTHR11570">
    <property type="entry name" value="S-ADENOSYLMETHIONINE DECARBOXYLASE"/>
    <property type="match status" value="1"/>
</dbReference>
<dbReference type="PANTHER" id="PTHR11570:SF24">
    <property type="entry name" value="S-ADENOSYLMETHIONINE DECARBOXYLASE PROENZYME"/>
    <property type="match status" value="1"/>
</dbReference>
<dbReference type="Pfam" id="PF01536">
    <property type="entry name" value="SAM_decarbox"/>
    <property type="match status" value="1"/>
</dbReference>
<dbReference type="PIRSF" id="PIRSF001355">
    <property type="entry name" value="S-AdenosylMet_decarboxylase"/>
    <property type="match status" value="1"/>
</dbReference>
<dbReference type="SUPFAM" id="SSF56276">
    <property type="entry name" value="S-adenosylmethionine decarboxylase"/>
    <property type="match status" value="1"/>
</dbReference>
<dbReference type="PROSITE" id="PS01336">
    <property type="entry name" value="ADOMETDC"/>
    <property type="match status" value="1"/>
</dbReference>
<sequence length="400" mass="43516">MAVLSAADASPVSAIGFEGYEKRLEITFSEAPVFVDPHGRGLRALSRAQIDSVLDLARCTIVSELSNKDFDSYVLSESSLFIYPLKIVIKTCGTTKLLLTIPRILELAEELSMPLAAVKYSRGTFIFPGAQPAPHRSFSEEVAALNRYFGGLKSGGNAYVIGDPARPGQKWHVFYATEYPEQPMVNLEMCMTGLDKKKACVFFKTNADGNTTCAKEMTKLSGISEIIPEMEICDFDFEPCGYSMNAIHGSAFSTIHVTPEDGFSYASYEVMGLDATALSYGDLVKRVLRCFGPSEFSVAVTIFGGRGHAGTWGKALGAEVYDCNNMVEQELPGGGLLVYQSFCAAEDAVATSPKSVFHCFDGENVESAPPPMKKDYKLANLLCWEEEADAMEEKAGVLDE</sequence>
<gene>
    <name type="primary">SAMDC</name>
</gene>
<evidence type="ECO:0000250" key="1"/>
<evidence type="ECO:0000305" key="2"/>
<reference key="1">
    <citation type="submission" date="1996-09" db="EMBL/GenBank/DDBJ databases">
        <authorList>
            <person name="Michael A.J."/>
        </authorList>
    </citation>
    <scope>NUCLEOTIDE SEQUENCE [MRNA]</scope>
</reference>